<keyword id="KW-1185">Reference proteome</keyword>
<name>PPE59_MYCTO</name>
<proteinExistence type="inferred from homology"/>
<accession>P9WHY0</accession>
<accession>L0TFC8</accession>
<accession>O06246</accession>
<dbReference type="EMBL" id="AE000516">
    <property type="protein sequence ID" value="AAK47873.1"/>
    <property type="molecule type" value="Genomic_DNA"/>
</dbReference>
<dbReference type="PIR" id="C70975">
    <property type="entry name" value="C70975"/>
</dbReference>
<dbReference type="RefSeq" id="WP_003900053.1">
    <property type="nucleotide sequence ID" value="NZ_KK341227.1"/>
</dbReference>
<dbReference type="SMR" id="P9WHY0"/>
<dbReference type="KEGG" id="mtc:MT3533"/>
<dbReference type="HOGENOM" id="CLU_000243_10_5_11"/>
<dbReference type="Proteomes" id="UP000001020">
    <property type="component" value="Chromosome"/>
</dbReference>
<dbReference type="GO" id="GO:0052572">
    <property type="term" value="P:response to host immune response"/>
    <property type="evidence" value="ECO:0007669"/>
    <property type="project" value="TreeGrafter"/>
</dbReference>
<dbReference type="Gene3D" id="1.20.1260.20">
    <property type="entry name" value="PPE superfamily"/>
    <property type="match status" value="1"/>
</dbReference>
<dbReference type="InterPro" id="IPR000030">
    <property type="entry name" value="PPE_dom"/>
</dbReference>
<dbReference type="InterPro" id="IPR038332">
    <property type="entry name" value="PPE_sf"/>
</dbReference>
<dbReference type="PANTHER" id="PTHR46766">
    <property type="entry name" value="GLUTAMINE-RICH PROTEIN 2"/>
    <property type="match status" value="1"/>
</dbReference>
<dbReference type="PANTHER" id="PTHR46766:SF1">
    <property type="entry name" value="GLUTAMINE-RICH PROTEIN 2"/>
    <property type="match status" value="1"/>
</dbReference>
<dbReference type="Pfam" id="PF00823">
    <property type="entry name" value="PPE"/>
    <property type="match status" value="1"/>
</dbReference>
<dbReference type="SUPFAM" id="SSF140459">
    <property type="entry name" value="PE/PPE dimer-like"/>
    <property type="match status" value="1"/>
</dbReference>
<evidence type="ECO:0000305" key="1"/>
<organism>
    <name type="scientific">Mycobacterium tuberculosis (strain CDC 1551 / Oshkosh)</name>
    <dbReference type="NCBI Taxonomy" id="83331"/>
    <lineage>
        <taxon>Bacteria</taxon>
        <taxon>Bacillati</taxon>
        <taxon>Actinomycetota</taxon>
        <taxon>Actinomycetes</taxon>
        <taxon>Mycobacteriales</taxon>
        <taxon>Mycobacteriaceae</taxon>
        <taxon>Mycobacterium</taxon>
        <taxon>Mycobacterium tuberculosis complex</taxon>
    </lineage>
</organism>
<sequence length="178" mass="19811">MHPMIPAEYISNIIYEGPGADSLSAAAEQLRLMYNSANMTAKSLTDRLGELQENWKGSSSDLMADAAGRYLDWLTKHSRQILETAYVIDFLAYVYEETRHKVVPPATIANNREEVHRLIASNVAGVNTPAIAGLDAQYQQYRAQNIAVMNDYQSTARFILAYLPRWQEPPQIYGGGGG</sequence>
<protein>
    <recommendedName>
        <fullName>Uncharacterized PPE family protein PPE59</fullName>
    </recommendedName>
</protein>
<feature type="chain" id="PRO_0000428103" description="Uncharacterized PPE family protein PPE59">
    <location>
        <begin position="1"/>
        <end position="178"/>
    </location>
</feature>
<gene>
    <name type="primary">PPE59</name>
    <name type="ordered locus">MT3533</name>
</gene>
<comment type="similarity">
    <text evidence="1">Belongs to the mycobacterial PPE family.</text>
</comment>
<reference key="1">
    <citation type="journal article" date="2002" name="J. Bacteriol.">
        <title>Whole-genome comparison of Mycobacterium tuberculosis clinical and laboratory strains.</title>
        <authorList>
            <person name="Fleischmann R.D."/>
            <person name="Alland D."/>
            <person name="Eisen J.A."/>
            <person name="Carpenter L."/>
            <person name="White O."/>
            <person name="Peterson J.D."/>
            <person name="DeBoy R.T."/>
            <person name="Dodson R.J."/>
            <person name="Gwinn M.L."/>
            <person name="Haft D.H."/>
            <person name="Hickey E.K."/>
            <person name="Kolonay J.F."/>
            <person name="Nelson W.C."/>
            <person name="Umayam L.A."/>
            <person name="Ermolaeva M.D."/>
            <person name="Salzberg S.L."/>
            <person name="Delcher A."/>
            <person name="Utterback T.R."/>
            <person name="Weidman J.F."/>
            <person name="Khouri H.M."/>
            <person name="Gill J."/>
            <person name="Mikula A."/>
            <person name="Bishai W."/>
            <person name="Jacobs W.R. Jr."/>
            <person name="Venter J.C."/>
            <person name="Fraser C.M."/>
        </authorList>
    </citation>
    <scope>NUCLEOTIDE SEQUENCE [LARGE SCALE GENOMIC DNA]</scope>
    <source>
        <strain>CDC 1551 / Oshkosh</strain>
    </source>
</reference>